<name>QCRC_MYCBO</name>
<sequence length="280" mass="29138">MTKLGFTRSGGSKSGRTRRRLRRRLSGGVLLLIALTIAGGLAAVLTPTPQVAVADESSSALLRTGKQLFDTSCVSCHGANLQGVPDHGPSLIGVGEAAVYFQVSTGRMPAMRGEAQAPRKDPIFDEAQIDAIGAYVQANGGGPTVVRNPDGSIATQSLRGNDLGRGGDLFRLNCASCHNFTGKGGALSSGKYAPDLAPANEQQILTAMLTGPQNMPKFSNRQLSFEAKKDIIAYVKVATEARQPGGYLLGGFGPAPEGMAMWIIGMVAAIGLALWIGARS</sequence>
<feature type="chain" id="PRO_0000108448" description="Cytochrome bc1 complex cytochrome c subunit">
    <location>
        <begin position="1"/>
        <end position="280"/>
    </location>
</feature>
<feature type="transmembrane region" description="Helical" evidence="3">
    <location>
        <begin position="25"/>
        <end position="45"/>
    </location>
</feature>
<feature type="transmembrane region" description="Helical" evidence="3">
    <location>
        <begin position="258"/>
        <end position="278"/>
    </location>
</feature>
<feature type="domain" description="Cytochrome c 1" evidence="4">
    <location>
        <begin position="60"/>
        <end position="140"/>
    </location>
</feature>
<feature type="domain" description="Cytochrome c 2" evidence="4">
    <location>
        <begin position="161"/>
        <end position="239"/>
    </location>
</feature>
<feature type="binding site" description="covalent" evidence="4">
    <location>
        <position position="73"/>
    </location>
    <ligand>
        <name>heme c</name>
        <dbReference type="ChEBI" id="CHEBI:61717"/>
        <label>1</label>
    </ligand>
</feature>
<feature type="binding site" description="covalent" evidence="4">
    <location>
        <position position="76"/>
    </location>
    <ligand>
        <name>heme c</name>
        <dbReference type="ChEBI" id="CHEBI:61717"/>
        <label>1</label>
    </ligand>
</feature>
<feature type="binding site" description="axial binding residue" evidence="4">
    <location>
        <position position="77"/>
    </location>
    <ligand>
        <name>heme c</name>
        <dbReference type="ChEBI" id="CHEBI:61717"/>
        <label>1</label>
    </ligand>
    <ligandPart>
        <name>Fe</name>
        <dbReference type="ChEBI" id="CHEBI:18248"/>
    </ligandPart>
</feature>
<feature type="binding site" description="covalent" evidence="4">
    <location>
        <position position="174"/>
    </location>
    <ligand>
        <name>heme c</name>
        <dbReference type="ChEBI" id="CHEBI:61717"/>
        <label>2</label>
    </ligand>
</feature>
<feature type="binding site" description="covalent" evidence="4">
    <location>
        <position position="177"/>
    </location>
    <ligand>
        <name>heme c</name>
        <dbReference type="ChEBI" id="CHEBI:61717"/>
        <label>2</label>
    </ligand>
</feature>
<feature type="binding site" description="axial binding residue" evidence="4">
    <location>
        <position position="178"/>
    </location>
    <ligand>
        <name>heme c</name>
        <dbReference type="ChEBI" id="CHEBI:61717"/>
        <label>2</label>
    </ligand>
    <ligandPart>
        <name>Fe</name>
        <dbReference type="ChEBI" id="CHEBI:18248"/>
    </ligandPart>
</feature>
<protein>
    <recommendedName>
        <fullName>Cytochrome bc1 complex cytochrome c subunit</fullName>
        <ecNumber evidence="1">7.1.1.8</ecNumber>
    </recommendedName>
    <alternativeName>
        <fullName>Cytochrome bc1 reductase complex subunit QcrC</fullName>
    </alternativeName>
    <alternativeName>
        <fullName>Ubiquinol--cytochrome c reductase cytochrome c subunit</fullName>
    </alternativeName>
</protein>
<proteinExistence type="inferred from homology"/>
<reference key="1">
    <citation type="journal article" date="2003" name="Proc. Natl. Acad. Sci. U.S.A.">
        <title>The complete genome sequence of Mycobacterium bovis.</title>
        <authorList>
            <person name="Garnier T."/>
            <person name="Eiglmeier K."/>
            <person name="Camus J.-C."/>
            <person name="Medina N."/>
            <person name="Mansoor H."/>
            <person name="Pryor M."/>
            <person name="Duthoy S."/>
            <person name="Grondin S."/>
            <person name="Lacroix C."/>
            <person name="Monsempe C."/>
            <person name="Simon S."/>
            <person name="Harris B."/>
            <person name="Atkin R."/>
            <person name="Doggett J."/>
            <person name="Mayes R."/>
            <person name="Keating L."/>
            <person name="Wheeler P.R."/>
            <person name="Parkhill J."/>
            <person name="Barrell B.G."/>
            <person name="Cole S.T."/>
            <person name="Gordon S.V."/>
            <person name="Hewinson R.G."/>
        </authorList>
    </citation>
    <scope>NUCLEOTIDE SEQUENCE [LARGE SCALE GENOMIC DNA]</scope>
    <source>
        <strain>ATCC BAA-935 / AF2122/97</strain>
    </source>
</reference>
<reference key="2">
    <citation type="journal article" date="2017" name="Genome Announc.">
        <title>Updated reference genome sequence and annotation of Mycobacterium bovis AF2122/97.</title>
        <authorList>
            <person name="Malone K.M."/>
            <person name="Farrell D."/>
            <person name="Stuber T.P."/>
            <person name="Schubert O.T."/>
            <person name="Aebersold R."/>
            <person name="Robbe-Austerman S."/>
            <person name="Gordon S.V."/>
        </authorList>
    </citation>
    <scope>NUCLEOTIDE SEQUENCE [LARGE SCALE GENOMIC DNA]</scope>
    <scope>GENOME REANNOTATION</scope>
    <source>
        <strain>ATCC BAA-935 / AF2122/97</strain>
    </source>
</reference>
<organism>
    <name type="scientific">Mycobacterium bovis (strain ATCC BAA-935 / AF2122/97)</name>
    <dbReference type="NCBI Taxonomy" id="233413"/>
    <lineage>
        <taxon>Bacteria</taxon>
        <taxon>Bacillati</taxon>
        <taxon>Actinomycetota</taxon>
        <taxon>Actinomycetes</taxon>
        <taxon>Mycobacteriales</taxon>
        <taxon>Mycobacteriaceae</taxon>
        <taxon>Mycobacterium</taxon>
        <taxon>Mycobacterium tuberculosis complex</taxon>
    </lineage>
</organism>
<dbReference type="EC" id="7.1.1.8" evidence="1"/>
<dbReference type="EMBL" id="LT708304">
    <property type="protein sequence ID" value="SIU00825.1"/>
    <property type="molecule type" value="Genomic_DNA"/>
</dbReference>
<dbReference type="RefSeq" id="NP_855866.1">
    <property type="nucleotide sequence ID" value="NC_002945.3"/>
</dbReference>
<dbReference type="RefSeq" id="WP_003411392.1">
    <property type="nucleotide sequence ID" value="NC_002945.4"/>
</dbReference>
<dbReference type="SMR" id="P63888"/>
<dbReference type="KEGG" id="mbo:BQ2027_MB2217"/>
<dbReference type="PATRIC" id="fig|233413.5.peg.2433"/>
<dbReference type="Proteomes" id="UP000001419">
    <property type="component" value="Chromosome"/>
</dbReference>
<dbReference type="GO" id="GO:0005886">
    <property type="term" value="C:plasma membrane"/>
    <property type="evidence" value="ECO:0007669"/>
    <property type="project" value="UniProtKB-SubCell"/>
</dbReference>
<dbReference type="GO" id="GO:0020037">
    <property type="term" value="F:heme binding"/>
    <property type="evidence" value="ECO:0007669"/>
    <property type="project" value="InterPro"/>
</dbReference>
<dbReference type="GO" id="GO:0005506">
    <property type="term" value="F:iron ion binding"/>
    <property type="evidence" value="ECO:0007669"/>
    <property type="project" value="InterPro"/>
</dbReference>
<dbReference type="GO" id="GO:0008121">
    <property type="term" value="F:ubiquinol-cytochrome-c reductase activity"/>
    <property type="evidence" value="ECO:0007669"/>
    <property type="project" value="UniProtKB-EC"/>
</dbReference>
<dbReference type="FunFam" id="1.10.760.10:FF:000009">
    <property type="entry name" value="Cytochrome bc1 complex cytochrome c subunit"/>
    <property type="match status" value="1"/>
</dbReference>
<dbReference type="Gene3D" id="1.10.760.10">
    <property type="entry name" value="Cytochrome c-like domain"/>
    <property type="match status" value="2"/>
</dbReference>
<dbReference type="InterPro" id="IPR009152">
    <property type="entry name" value="bc1_cytC-su"/>
</dbReference>
<dbReference type="InterPro" id="IPR009056">
    <property type="entry name" value="Cyt_c-like_dom"/>
</dbReference>
<dbReference type="InterPro" id="IPR036909">
    <property type="entry name" value="Cyt_c-like_dom_sf"/>
</dbReference>
<dbReference type="InterPro" id="IPR050597">
    <property type="entry name" value="Cytochrome_c_Oxidase_Subunit"/>
</dbReference>
<dbReference type="PANTHER" id="PTHR33751">
    <property type="entry name" value="CBB3-TYPE CYTOCHROME C OXIDASE SUBUNIT FIXP"/>
    <property type="match status" value="1"/>
</dbReference>
<dbReference type="PANTHER" id="PTHR33751:SF13">
    <property type="entry name" value="CYTOCHROME BC1 COMPLEX CYTOCHROME C SUBUNIT"/>
    <property type="match status" value="1"/>
</dbReference>
<dbReference type="Pfam" id="PF00034">
    <property type="entry name" value="Cytochrom_C"/>
    <property type="match status" value="1"/>
</dbReference>
<dbReference type="Pfam" id="PF13442">
    <property type="entry name" value="Cytochrome_CBB3"/>
    <property type="match status" value="1"/>
</dbReference>
<dbReference type="PIRSF" id="PIRSF000007">
    <property type="entry name" value="Ubiq_cycred_cyc"/>
    <property type="match status" value="1"/>
</dbReference>
<dbReference type="SUPFAM" id="SSF46626">
    <property type="entry name" value="Cytochrome c"/>
    <property type="match status" value="2"/>
</dbReference>
<dbReference type="PROSITE" id="PS51007">
    <property type="entry name" value="CYTC"/>
    <property type="match status" value="2"/>
</dbReference>
<accession>P63888</accession>
<accession>A0A1R3Y186</accession>
<accession>Q10386</accession>
<accession>X2BKD0</accession>
<evidence type="ECO:0000250" key="1">
    <source>
        <dbReference type="UniProtKB" id="P9WP35"/>
    </source>
</evidence>
<evidence type="ECO:0000250" key="2">
    <source>
        <dbReference type="UniProtKB" id="Q8NNK5"/>
    </source>
</evidence>
<evidence type="ECO:0000255" key="3"/>
<evidence type="ECO:0000255" key="4">
    <source>
        <dbReference type="PROSITE-ProRule" id="PRU00433"/>
    </source>
</evidence>
<gene>
    <name type="primary">qcrC</name>
    <name type="ordered locus">BQ2027_MB2217</name>
</gene>
<keyword id="KW-1003">Cell membrane</keyword>
<keyword id="KW-0249">Electron transport</keyword>
<keyword id="KW-0349">Heme</keyword>
<keyword id="KW-0408">Iron</keyword>
<keyword id="KW-0472">Membrane</keyword>
<keyword id="KW-0479">Metal-binding</keyword>
<keyword id="KW-1185">Reference proteome</keyword>
<keyword id="KW-0677">Repeat</keyword>
<keyword id="KW-0679">Respiratory chain</keyword>
<keyword id="KW-1278">Translocase</keyword>
<keyword id="KW-0812">Transmembrane</keyword>
<keyword id="KW-1133">Transmembrane helix</keyword>
<keyword id="KW-0813">Transport</keyword>
<comment type="function">
    <text evidence="1">Cytochrome b subunit of the cytochrome bc1 complex, an essential component of the respiratory electron transport chain required for ATP synthesis. The bc1 complex catalyzes the oxidation of ubiquinol and the reduction of cytochrome c in the respiratory chain. The bc1 complex operates through a Q-cycle mechanism that couples electron transfer to generation of the proton gradient that drives ATP synthesis.</text>
</comment>
<comment type="catalytic activity">
    <reaction evidence="1">
        <text>a quinol + 2 Fe(III)-[cytochrome c](out) = a quinone + 2 Fe(II)-[cytochrome c](out) + 2 H(+)(out)</text>
        <dbReference type="Rhea" id="RHEA:11484"/>
        <dbReference type="Rhea" id="RHEA-COMP:10350"/>
        <dbReference type="Rhea" id="RHEA-COMP:14399"/>
        <dbReference type="ChEBI" id="CHEBI:15378"/>
        <dbReference type="ChEBI" id="CHEBI:24646"/>
        <dbReference type="ChEBI" id="CHEBI:29033"/>
        <dbReference type="ChEBI" id="CHEBI:29034"/>
        <dbReference type="ChEBI" id="CHEBI:132124"/>
        <dbReference type="EC" id="7.1.1.8"/>
    </reaction>
</comment>
<comment type="subunit">
    <text evidence="1">The cytochrome bc1 complex is composed of a cytochrome b (QcrB), the Rieske iron-sulfur protein (QcrA) and a diheme cytochrome c (QcrC) subunit.</text>
</comment>
<comment type="subcellular location">
    <subcellularLocation>
        <location evidence="3">Cell membrane</location>
        <topology evidence="3">Multi-pass membrane protein</topology>
    </subcellularLocation>
</comment>
<comment type="PTM">
    <text evidence="2">Binds 2 heme c groups covalently per subunit.</text>
</comment>